<dbReference type="EMBL" id="CR954246">
    <property type="protein sequence ID" value="CAI86785.1"/>
    <property type="status" value="ALT_INIT"/>
    <property type="molecule type" value="Genomic_DNA"/>
</dbReference>
<dbReference type="SMR" id="Q3IH20"/>
<dbReference type="STRING" id="326442.PSHAa1713"/>
<dbReference type="KEGG" id="pha:PSHAa1713"/>
<dbReference type="eggNOG" id="COG0239">
    <property type="taxonomic scope" value="Bacteria"/>
</dbReference>
<dbReference type="HOGENOM" id="CLU_114342_3_0_6"/>
<dbReference type="Proteomes" id="UP000006843">
    <property type="component" value="Chromosome I"/>
</dbReference>
<dbReference type="GO" id="GO:0005886">
    <property type="term" value="C:plasma membrane"/>
    <property type="evidence" value="ECO:0007669"/>
    <property type="project" value="UniProtKB-SubCell"/>
</dbReference>
<dbReference type="GO" id="GO:0062054">
    <property type="term" value="F:fluoride channel activity"/>
    <property type="evidence" value="ECO:0007669"/>
    <property type="project" value="UniProtKB-UniRule"/>
</dbReference>
<dbReference type="GO" id="GO:0046872">
    <property type="term" value="F:metal ion binding"/>
    <property type="evidence" value="ECO:0007669"/>
    <property type="project" value="UniProtKB-KW"/>
</dbReference>
<dbReference type="GO" id="GO:0140114">
    <property type="term" value="P:cellular detoxification of fluoride"/>
    <property type="evidence" value="ECO:0007669"/>
    <property type="project" value="UniProtKB-UniRule"/>
</dbReference>
<dbReference type="HAMAP" id="MF_00454">
    <property type="entry name" value="FluC"/>
    <property type="match status" value="1"/>
</dbReference>
<dbReference type="InterPro" id="IPR003691">
    <property type="entry name" value="FluC"/>
</dbReference>
<dbReference type="NCBIfam" id="TIGR00494">
    <property type="entry name" value="crcB"/>
    <property type="match status" value="1"/>
</dbReference>
<dbReference type="NCBIfam" id="NF010796">
    <property type="entry name" value="PRK14200.1"/>
    <property type="match status" value="1"/>
</dbReference>
<dbReference type="PANTHER" id="PTHR28259">
    <property type="entry name" value="FLUORIDE EXPORT PROTEIN 1-RELATED"/>
    <property type="match status" value="1"/>
</dbReference>
<dbReference type="PANTHER" id="PTHR28259:SF1">
    <property type="entry name" value="FLUORIDE EXPORT PROTEIN 1-RELATED"/>
    <property type="match status" value="1"/>
</dbReference>
<dbReference type="Pfam" id="PF02537">
    <property type="entry name" value="CRCB"/>
    <property type="match status" value="1"/>
</dbReference>
<accession>Q3IH20</accession>
<evidence type="ECO:0000255" key="1">
    <source>
        <dbReference type="HAMAP-Rule" id="MF_00454"/>
    </source>
</evidence>
<evidence type="ECO:0000305" key="2"/>
<comment type="function">
    <text evidence="1">Fluoride-specific ion channel. Important for reducing fluoride concentration in the cell, thus reducing its toxicity.</text>
</comment>
<comment type="catalytic activity">
    <reaction evidence="1">
        <text>fluoride(in) = fluoride(out)</text>
        <dbReference type="Rhea" id="RHEA:76159"/>
        <dbReference type="ChEBI" id="CHEBI:17051"/>
    </reaction>
    <physiologicalReaction direction="left-to-right" evidence="1">
        <dbReference type="Rhea" id="RHEA:76160"/>
    </physiologicalReaction>
</comment>
<comment type="activity regulation">
    <text evidence="1">Na(+) is not transported, but it plays an essential structural role and its presence is essential for fluoride channel function.</text>
</comment>
<comment type="subcellular location">
    <subcellularLocation>
        <location evidence="1">Cell inner membrane</location>
        <topology evidence="1">Multi-pass membrane protein</topology>
    </subcellularLocation>
</comment>
<comment type="similarity">
    <text evidence="1">Belongs to the fluoride channel Fluc/FEX (TC 1.A.43) family.</text>
</comment>
<comment type="sequence caution" evidence="2">
    <conflict type="erroneous initiation">
        <sequence resource="EMBL-CDS" id="CAI86785"/>
    </conflict>
</comment>
<name>FLUC_PSET1</name>
<organism>
    <name type="scientific">Pseudoalteromonas translucida (strain TAC 125)</name>
    <dbReference type="NCBI Taxonomy" id="326442"/>
    <lineage>
        <taxon>Bacteria</taxon>
        <taxon>Pseudomonadati</taxon>
        <taxon>Pseudomonadota</taxon>
        <taxon>Gammaproteobacteria</taxon>
        <taxon>Alteromonadales</taxon>
        <taxon>Pseudoalteromonadaceae</taxon>
        <taxon>Pseudoalteromonas</taxon>
    </lineage>
</organism>
<protein>
    <recommendedName>
        <fullName evidence="1">Fluoride-specific ion channel FluC</fullName>
    </recommendedName>
</protein>
<keyword id="KW-0997">Cell inner membrane</keyword>
<keyword id="KW-1003">Cell membrane</keyword>
<keyword id="KW-0407">Ion channel</keyword>
<keyword id="KW-0406">Ion transport</keyword>
<keyword id="KW-0472">Membrane</keyword>
<keyword id="KW-0479">Metal-binding</keyword>
<keyword id="KW-1185">Reference proteome</keyword>
<keyword id="KW-0915">Sodium</keyword>
<keyword id="KW-0812">Transmembrane</keyword>
<keyword id="KW-1133">Transmembrane helix</keyword>
<keyword id="KW-0813">Transport</keyword>
<feature type="chain" id="PRO_0000252913" description="Fluoride-specific ion channel FluC">
    <location>
        <begin position="1"/>
        <end position="120"/>
    </location>
</feature>
<feature type="transmembrane region" description="Helical" evidence="1">
    <location>
        <begin position="30"/>
        <end position="50"/>
    </location>
</feature>
<feature type="transmembrane region" description="Helical" evidence="1">
    <location>
        <begin position="66"/>
        <end position="86"/>
    </location>
</feature>
<feature type="transmembrane region" description="Helical" evidence="1">
    <location>
        <begin position="96"/>
        <end position="116"/>
    </location>
</feature>
<feature type="binding site" evidence="1">
    <location>
        <position position="70"/>
    </location>
    <ligand>
        <name>Na(+)</name>
        <dbReference type="ChEBI" id="CHEBI:29101"/>
        <note>structural</note>
    </ligand>
</feature>
<feature type="binding site" evidence="1">
    <location>
        <position position="73"/>
    </location>
    <ligand>
        <name>Na(+)</name>
        <dbReference type="ChEBI" id="CHEBI:29101"/>
        <note>structural</note>
    </ligand>
</feature>
<sequence length="120" mass="12815">MIALGGASGACLRFFISESMLKLLGRGFPFGTLAVNILGSLLMGILYGLLDKDIIAESPAKALIGVGFLGALTTFSTFSMDSLLLLQQGHFIKMALNIILNVMVCIFMAWLGLQLVMQKG</sequence>
<proteinExistence type="inferred from homology"/>
<reference key="1">
    <citation type="journal article" date="2005" name="Genome Res.">
        <title>Coping with cold: the genome of the versatile marine Antarctica bacterium Pseudoalteromonas haloplanktis TAC125.</title>
        <authorList>
            <person name="Medigue C."/>
            <person name="Krin E."/>
            <person name="Pascal G."/>
            <person name="Barbe V."/>
            <person name="Bernsel A."/>
            <person name="Bertin P.N."/>
            <person name="Cheung F."/>
            <person name="Cruveiller S."/>
            <person name="D'Amico S."/>
            <person name="Duilio A."/>
            <person name="Fang G."/>
            <person name="Feller G."/>
            <person name="Ho C."/>
            <person name="Mangenot S."/>
            <person name="Marino G."/>
            <person name="Nilsson J."/>
            <person name="Parrilli E."/>
            <person name="Rocha E.P.C."/>
            <person name="Rouy Z."/>
            <person name="Sekowska A."/>
            <person name="Tutino M.L."/>
            <person name="Vallenet D."/>
            <person name="von Heijne G."/>
            <person name="Danchin A."/>
        </authorList>
    </citation>
    <scope>NUCLEOTIDE SEQUENCE [LARGE SCALE GENOMIC DNA]</scope>
    <source>
        <strain>TAC 125</strain>
    </source>
</reference>
<gene>
    <name evidence="1" type="primary">fluC</name>
    <name evidence="1" type="synonym">crcB</name>
    <name type="ordered locus">PSHAa1713</name>
</gene>